<gene>
    <name type="primary">HP</name>
</gene>
<keyword id="KW-0011">Acute phase</keyword>
<keyword id="KW-0044">Antibiotic</keyword>
<keyword id="KW-0929">Antimicrobial</keyword>
<keyword id="KW-0049">Antioxidant</keyword>
<keyword id="KW-1015">Disulfide bond</keyword>
<keyword id="KW-0325">Glycoprotein</keyword>
<keyword id="KW-0351">Hemoglobin-binding</keyword>
<keyword id="KW-0391">Immunity</keyword>
<keyword id="KW-0964">Secreted</keyword>
<keyword id="KW-0721">Serine protease homolog</keyword>
<keyword id="KW-0732">Signal</keyword>
<keyword id="KW-0768">Sushi</keyword>
<accession>P50417</accession>
<reference key="1">
    <citation type="submission" date="1994-01" db="EMBL/GenBank/DDBJ databases">
        <title>Nucleotide sequence of the spider monkey haptoglobin gene: the evolutionary history of the primate haptoglobin gene family.</title>
        <authorList>
            <person name="Erickson L.M."/>
            <person name="Becker L."/>
            <person name="Maeda N."/>
        </authorList>
    </citation>
    <scope>NUCLEOTIDE SEQUENCE</scope>
</reference>
<organism>
    <name type="scientific">Ateles geoffroyi</name>
    <name type="common">Black-handed spider monkey</name>
    <name type="synonym">Geoffroy's spider monkey</name>
    <dbReference type="NCBI Taxonomy" id="9509"/>
    <lineage>
        <taxon>Eukaryota</taxon>
        <taxon>Metazoa</taxon>
        <taxon>Chordata</taxon>
        <taxon>Craniata</taxon>
        <taxon>Vertebrata</taxon>
        <taxon>Euteleostomi</taxon>
        <taxon>Mammalia</taxon>
        <taxon>Eutheria</taxon>
        <taxon>Euarchontoglires</taxon>
        <taxon>Primates</taxon>
        <taxon>Haplorrhini</taxon>
        <taxon>Platyrrhini</taxon>
        <taxon>Atelidae</taxon>
        <taxon>Atelinae</taxon>
        <taxon>Ateles</taxon>
    </lineage>
</organism>
<evidence type="ECO:0000250" key="1"/>
<evidence type="ECO:0000250" key="2">
    <source>
        <dbReference type="UniProtKB" id="P00738"/>
    </source>
</evidence>
<evidence type="ECO:0000250" key="3">
    <source>
        <dbReference type="UniProtKB" id="Q8SPS7"/>
    </source>
</evidence>
<evidence type="ECO:0000255" key="4"/>
<evidence type="ECO:0000255" key="5">
    <source>
        <dbReference type="PROSITE-ProRule" id="PRU00274"/>
    </source>
</evidence>
<evidence type="ECO:0000255" key="6">
    <source>
        <dbReference type="PROSITE-ProRule" id="PRU00302"/>
    </source>
</evidence>
<evidence type="ECO:0000305" key="7"/>
<sequence length="347" mass="38476">MSALGAVIALLLWGQLFAVDSGNDVTDIADDGCPKPPEIANGYVEHLVRYQCKKYYRLRTEGDGVYTLNNEKQWTNKAVGDKLPECEAVCGKPKNPANPVQRILGGHLDAKGSFPWQAKMVSRHNLTTGATLINEQWLLTTAKNLFLNHSENATAKDIAPTLTLYVGKNQLVEIEKVVLYPNYSQVDIGLIKLKDKVPVNERVMPICLPSKDYAEVGRVGYVSGWGRNANFKFTDHLKYVMLPVADQYQCVKHYEGSTVPEKKTPKSPVGQQPILNEHTFCAGMSKYQEDTCYGDAGSAFAVHDLEEDTWYAAGILSFDKSCGVAEYGVYVKATSIQDWVQKTIAEN</sequence>
<protein>
    <recommendedName>
        <fullName>Haptoglobin</fullName>
    </recommendedName>
    <component>
        <recommendedName>
            <fullName>Haptoglobin alpha chain</fullName>
        </recommendedName>
    </component>
    <component>
        <recommendedName>
            <fullName>Haptoglobin beta chain</fullName>
        </recommendedName>
    </component>
</protein>
<comment type="function">
    <text evidence="1">As a result of hemolysis, hemoglobin is found to accumulate in the kidney and is secreted in the urine. Haptoglobin captures, and combines with free plasma hemoglobin to allow hepatic recycling of heme iron and to prevent kidney damage. Haptoglobin also acts as an antioxidant, has antibacterial activity and plays a role in modulating many aspects of the acute phase response. Hemoglobin/haptoglobin complexes are rapidly cleared by the macrophage CD163 scavenger receptor expressed on the surface of liver Kupfer cells through an endocytic lysosomal degradation pathway (By similarity).</text>
</comment>
<comment type="subunit">
    <text evidence="2 3">Tetramer of two alpha and two beta chains; disulfide-linked (By similarity). The hemoglobin/haptoglobin complex is composed of a haptoglobin dimer bound to two hemoglobin alpha-beta dimers (By similarity). Interacts with CD163 (By similarity). Interacts with ERGIC3 (By similarity).</text>
</comment>
<comment type="subcellular location">
    <subcellularLocation>
        <location evidence="1">Secreted</location>
    </subcellularLocation>
</comment>
<comment type="tissue specificity">
    <text>Expressed by the liver and secreted in plasma.</text>
</comment>
<comment type="domain">
    <text evidence="1">The beta chain mediates most of the interactions with both subunits of hemoglobin, while the alpha chain forms the homodimeric interface.</text>
</comment>
<comment type="similarity">
    <text evidence="5">Belongs to the peptidase S1 family.</text>
</comment>
<comment type="caution">
    <text evidence="7">Although homologous to serine proteases, it has lost all essential catalytic residues and has no enzymatic activity.</text>
</comment>
<name>HPT_ATEGE</name>
<feature type="signal peptide" evidence="1">
    <location>
        <begin position="1"/>
        <end position="18"/>
    </location>
</feature>
<feature type="chain" id="PRO_0000028449" description="Haptoglobin">
    <location>
        <begin position="19"/>
        <end position="347"/>
    </location>
</feature>
<feature type="chain" id="PRO_0000028450" description="Haptoglobin alpha chain">
    <location>
        <begin position="19"/>
        <end position="101"/>
    </location>
</feature>
<feature type="chain" id="PRO_0000028451" description="Haptoglobin beta chain">
    <location>
        <begin position="103"/>
        <end position="347"/>
    </location>
</feature>
<feature type="domain" description="Sushi" evidence="6">
    <location>
        <begin position="31"/>
        <end position="88"/>
    </location>
</feature>
<feature type="domain" description="Peptidase S1" evidence="5">
    <location>
        <begin position="103"/>
        <end position="345"/>
    </location>
</feature>
<feature type="region of interest" description="Interaction with CD163" evidence="1">
    <location>
        <begin position="259"/>
        <end position="264"/>
    </location>
</feature>
<feature type="glycosylation site" description="N-linked (GlcNAc...) asparagine" evidence="4">
    <location>
        <position position="125"/>
    </location>
</feature>
<feature type="glycosylation site" description="N-linked (GlcNAc...) asparagine" evidence="4">
    <location>
        <position position="148"/>
    </location>
</feature>
<feature type="glycosylation site" description="N-linked (GlcNAc...) asparagine" evidence="4">
    <location>
        <position position="152"/>
    </location>
</feature>
<feature type="glycosylation site" description="N-linked (GlcNAc...) asparagine" evidence="4">
    <location>
        <position position="182"/>
    </location>
</feature>
<feature type="disulfide bond" description="Interchain" evidence="1">
    <location>
        <position position="33"/>
    </location>
</feature>
<feature type="disulfide bond" evidence="1">
    <location>
        <begin position="52"/>
        <end position="86"/>
    </location>
</feature>
<feature type="disulfide bond" description="Interchain (between alpha and beta chains)" evidence="5 6">
    <location>
        <begin position="90"/>
        <end position="207"/>
    </location>
</feature>
<feature type="disulfide bond" evidence="1">
    <location>
        <begin position="250"/>
        <end position="281"/>
    </location>
</feature>
<feature type="disulfide bond" evidence="1">
    <location>
        <begin position="292"/>
        <end position="322"/>
    </location>
</feature>
<proteinExistence type="evidence at transcript level"/>
<dbReference type="EMBL" id="U04852">
    <property type="protein sequence ID" value="AAA03727.1"/>
    <property type="molecule type" value="Unassigned_DNA"/>
</dbReference>
<dbReference type="PIR" id="G00006">
    <property type="entry name" value="G00006"/>
</dbReference>
<dbReference type="SMR" id="P50417"/>
<dbReference type="MEROPS" id="S01.972"/>
<dbReference type="GlyCosmos" id="P50417">
    <property type="glycosylation" value="4 sites, No reported glycans"/>
</dbReference>
<dbReference type="GO" id="GO:0072562">
    <property type="term" value="C:blood microparticle"/>
    <property type="evidence" value="ECO:0007669"/>
    <property type="project" value="TreeGrafter"/>
</dbReference>
<dbReference type="GO" id="GO:0016209">
    <property type="term" value="F:antioxidant activity"/>
    <property type="evidence" value="ECO:0007669"/>
    <property type="project" value="UniProtKB-KW"/>
</dbReference>
<dbReference type="GO" id="GO:0030492">
    <property type="term" value="F:hemoglobin binding"/>
    <property type="evidence" value="ECO:0007669"/>
    <property type="project" value="UniProtKB-KW"/>
</dbReference>
<dbReference type="GO" id="GO:0006953">
    <property type="term" value="P:acute-phase response"/>
    <property type="evidence" value="ECO:0007669"/>
    <property type="project" value="UniProtKB-KW"/>
</dbReference>
<dbReference type="GO" id="GO:0042742">
    <property type="term" value="P:defense response to bacterium"/>
    <property type="evidence" value="ECO:0007669"/>
    <property type="project" value="UniProtKB-KW"/>
</dbReference>
<dbReference type="GO" id="GO:0002376">
    <property type="term" value="P:immune system process"/>
    <property type="evidence" value="ECO:0007669"/>
    <property type="project" value="UniProtKB-KW"/>
</dbReference>
<dbReference type="CDD" id="cd00033">
    <property type="entry name" value="CCP"/>
    <property type="match status" value="1"/>
</dbReference>
<dbReference type="CDD" id="cd00190">
    <property type="entry name" value="Tryp_SPc"/>
    <property type="match status" value="1"/>
</dbReference>
<dbReference type="FunFam" id="2.10.70.10:FF:000048">
    <property type="entry name" value="Haptoglobin"/>
    <property type="match status" value="1"/>
</dbReference>
<dbReference type="FunFam" id="2.40.10.10:FF:000027">
    <property type="entry name" value="Haptoglobin"/>
    <property type="match status" value="1"/>
</dbReference>
<dbReference type="FunFam" id="2.40.10.10:FF:000031">
    <property type="entry name" value="Haptoglobin"/>
    <property type="match status" value="1"/>
</dbReference>
<dbReference type="Gene3D" id="2.10.70.10">
    <property type="entry name" value="Complement Module, domain 1"/>
    <property type="match status" value="1"/>
</dbReference>
<dbReference type="Gene3D" id="2.40.10.10">
    <property type="entry name" value="Trypsin-like serine proteases"/>
    <property type="match status" value="2"/>
</dbReference>
<dbReference type="InterPro" id="IPR008292">
    <property type="entry name" value="Haptoglobin"/>
</dbReference>
<dbReference type="InterPro" id="IPR009003">
    <property type="entry name" value="Peptidase_S1_PA"/>
</dbReference>
<dbReference type="InterPro" id="IPR043504">
    <property type="entry name" value="Peptidase_S1_PA_chymotrypsin"/>
</dbReference>
<dbReference type="InterPro" id="IPR001314">
    <property type="entry name" value="Peptidase_S1A"/>
</dbReference>
<dbReference type="InterPro" id="IPR035976">
    <property type="entry name" value="Sushi/SCR/CCP_sf"/>
</dbReference>
<dbReference type="InterPro" id="IPR000436">
    <property type="entry name" value="Sushi_SCR_CCP_dom"/>
</dbReference>
<dbReference type="InterPro" id="IPR001254">
    <property type="entry name" value="Trypsin_dom"/>
</dbReference>
<dbReference type="PANTHER" id="PTHR24255">
    <property type="entry name" value="COMPLEMENT COMPONENT 1, S SUBCOMPONENT-RELATED"/>
    <property type="match status" value="1"/>
</dbReference>
<dbReference type="PANTHER" id="PTHR24255:SF27">
    <property type="entry name" value="HAPTOGLOBIN-RELATED PROTEIN"/>
    <property type="match status" value="1"/>
</dbReference>
<dbReference type="Pfam" id="PF00089">
    <property type="entry name" value="Trypsin"/>
    <property type="match status" value="1"/>
</dbReference>
<dbReference type="PIRSF" id="PIRSF001137">
    <property type="entry name" value="Haptoglobin"/>
    <property type="match status" value="1"/>
</dbReference>
<dbReference type="PRINTS" id="PR00722">
    <property type="entry name" value="CHYMOTRYPSIN"/>
</dbReference>
<dbReference type="SMART" id="SM00020">
    <property type="entry name" value="Tryp_SPc"/>
    <property type="match status" value="1"/>
</dbReference>
<dbReference type="SUPFAM" id="SSF57535">
    <property type="entry name" value="Complement control module/SCR domain"/>
    <property type="match status" value="1"/>
</dbReference>
<dbReference type="SUPFAM" id="SSF50494">
    <property type="entry name" value="Trypsin-like serine proteases"/>
    <property type="match status" value="1"/>
</dbReference>
<dbReference type="PROSITE" id="PS50923">
    <property type="entry name" value="SUSHI"/>
    <property type="match status" value="1"/>
</dbReference>
<dbReference type="PROSITE" id="PS50240">
    <property type="entry name" value="TRYPSIN_DOM"/>
    <property type="match status" value="1"/>
</dbReference>